<comment type="function">
    <text evidence="1">May negatively regulate RAC1 signaling and RAC1-driven cytoskeletal remodeling. May regulate chemotaxis, cell migration and epithelial polarization by controlling the polarity, plasticity, duration and extent of protrusions.</text>
</comment>
<comment type="subunit">
    <text evidence="2">Interacts with RAC1 (GTP-bound form preferentially).</text>
</comment>
<comment type="subcellular location">
    <subcellularLocation>
        <location evidence="2">Membrane</location>
        <topology evidence="2">Lipid-anchor</topology>
    </subcellularLocation>
</comment>
<comment type="similarity">
    <text evidence="3">Belongs to the CYRI family.</text>
</comment>
<organism>
    <name type="scientific">Bos taurus</name>
    <name type="common">Bovine</name>
    <dbReference type="NCBI Taxonomy" id="9913"/>
    <lineage>
        <taxon>Eukaryota</taxon>
        <taxon>Metazoa</taxon>
        <taxon>Chordata</taxon>
        <taxon>Craniata</taxon>
        <taxon>Vertebrata</taxon>
        <taxon>Euteleostomi</taxon>
        <taxon>Mammalia</taxon>
        <taxon>Eutheria</taxon>
        <taxon>Laurasiatheria</taxon>
        <taxon>Artiodactyla</taxon>
        <taxon>Ruminantia</taxon>
        <taxon>Pecora</taxon>
        <taxon>Bovidae</taxon>
        <taxon>Bovinae</taxon>
        <taxon>Bos</taxon>
    </lineage>
</organism>
<gene>
    <name type="primary">CYRIA</name>
    <name type="synonym">FAM49A</name>
</gene>
<accession>Q17QT7</accession>
<sequence length="323" mass="37313">MGNLLKVLTREIENYPHFFLDFENAQPTEGEREIWNQISAVLQDSESILADLQAYKGAGPEIRDAIQNPNDIQLQEKAWNAVCPLVVRLKRFYEFSIRLEKALQSLLESLTCPPYTPTQHLEREQALAKEFAEILHFTLRFDELKMRNPAIQNDFSYYRRTISRNRINNMHLDIENEVNNEMANRMSLFYAEATPMLKTLSNATMHFVSENKTLPIENTTDCLSTMTSVCKVMLETPEYRSRFTSEETLMFCMRVMVGVIILYDHVHPVGAFCKTSKIDMKGCIKVLKEQAPDSVEGLLNALRFTTKHLNDESTSKQIRAMLQ</sequence>
<name>CYRIA_BOVIN</name>
<protein>
    <recommendedName>
        <fullName>CYFIP-related Rac1 interactor A</fullName>
    </recommendedName>
</protein>
<proteinExistence type="evidence at transcript level"/>
<feature type="chain" id="PRO_0000290014" description="CYFIP-related Rac1 interactor A">
    <location>
        <begin position="1"/>
        <end position="323"/>
    </location>
</feature>
<reference key="1">
    <citation type="submission" date="2006-06" db="EMBL/GenBank/DDBJ databases">
        <authorList>
            <consortium name="NIH - Mammalian Gene Collection (MGC) project"/>
        </authorList>
    </citation>
    <scope>NUCLEOTIDE SEQUENCE [LARGE SCALE MRNA]</scope>
    <source>
        <strain>Hereford</strain>
        <tissue>Thalamus</tissue>
    </source>
</reference>
<evidence type="ECO:0000250" key="1">
    <source>
        <dbReference type="UniProtKB" id="Q9H0Q0"/>
    </source>
</evidence>
<evidence type="ECO:0000250" key="2">
    <source>
        <dbReference type="UniProtKB" id="Q9NUQ9"/>
    </source>
</evidence>
<evidence type="ECO:0000305" key="3"/>
<dbReference type="EMBL" id="BC118189">
    <property type="protein sequence ID" value="AAI18190.1"/>
    <property type="molecule type" value="mRNA"/>
</dbReference>
<dbReference type="RefSeq" id="NP_001068640.1">
    <property type="nucleotide sequence ID" value="NM_001075172.1"/>
</dbReference>
<dbReference type="SMR" id="Q17QT7"/>
<dbReference type="FunCoup" id="Q17QT7">
    <property type="interactions" value="846"/>
</dbReference>
<dbReference type="STRING" id="9913.ENSBTAP00000016983"/>
<dbReference type="PaxDb" id="9913-ENSBTAP00000016983"/>
<dbReference type="Ensembl" id="ENSBTAT00000070326.2">
    <property type="protein sequence ID" value="ENSBTAP00000061771.1"/>
    <property type="gene ID" value="ENSBTAG00000012779.5"/>
</dbReference>
<dbReference type="GeneID" id="504763"/>
<dbReference type="KEGG" id="bta:504763"/>
<dbReference type="CTD" id="81553"/>
<dbReference type="VEuPathDB" id="HostDB:ENSBTAG00000012779"/>
<dbReference type="VGNC" id="VGNC:28818">
    <property type="gene designation" value="CYRIA"/>
</dbReference>
<dbReference type="eggNOG" id="KOG3951">
    <property type="taxonomic scope" value="Eukaryota"/>
</dbReference>
<dbReference type="GeneTree" id="ENSGT00390000015159"/>
<dbReference type="HOGENOM" id="CLU_056470_0_0_1"/>
<dbReference type="InParanoid" id="Q17QT7"/>
<dbReference type="OMA" id="MANVCHD"/>
<dbReference type="OrthoDB" id="60973at2759"/>
<dbReference type="TreeFam" id="TF314541"/>
<dbReference type="Proteomes" id="UP000009136">
    <property type="component" value="Chromosome 11"/>
</dbReference>
<dbReference type="Bgee" id="ENSBTAG00000012779">
    <property type="expression patterns" value="Expressed in neutrophil and 103 other cell types or tissues"/>
</dbReference>
<dbReference type="GO" id="GO:0016020">
    <property type="term" value="C:membrane"/>
    <property type="evidence" value="ECO:0007669"/>
    <property type="project" value="UniProtKB-SubCell"/>
</dbReference>
<dbReference type="GO" id="GO:0031267">
    <property type="term" value="F:small GTPase binding"/>
    <property type="evidence" value="ECO:0007669"/>
    <property type="project" value="InterPro"/>
</dbReference>
<dbReference type="GO" id="GO:0030833">
    <property type="term" value="P:regulation of actin filament polymerization"/>
    <property type="evidence" value="ECO:0007669"/>
    <property type="project" value="InterPro"/>
</dbReference>
<dbReference type="InterPro" id="IPR039789">
    <property type="entry name" value="CYRI"/>
</dbReference>
<dbReference type="InterPro" id="IPR009828">
    <property type="entry name" value="CYRIA/CYRIB_Rac1-bd"/>
</dbReference>
<dbReference type="PANTHER" id="PTHR12422">
    <property type="entry name" value="GH09096P"/>
    <property type="match status" value="1"/>
</dbReference>
<dbReference type="Pfam" id="PF07159">
    <property type="entry name" value="CYRIA-B_Rac1-bd"/>
    <property type="match status" value="1"/>
</dbReference>
<keyword id="KW-0449">Lipoprotein</keyword>
<keyword id="KW-0472">Membrane</keyword>
<keyword id="KW-1185">Reference proteome</keyword>